<protein>
    <recommendedName>
        <fullName evidence="1">Glutamate-1-semialdehyde 2,1-aminomutase</fullName>
        <shortName evidence="1">GSA</shortName>
        <ecNumber evidence="1">5.4.3.8</ecNumber>
    </recommendedName>
    <alternativeName>
        <fullName evidence="1">Glutamate-1-semialdehyde aminotransferase</fullName>
        <shortName evidence="1">GSA-AT</shortName>
    </alternativeName>
</protein>
<comment type="catalytic activity">
    <reaction evidence="1">
        <text>(S)-4-amino-5-oxopentanoate = 5-aminolevulinate</text>
        <dbReference type="Rhea" id="RHEA:14265"/>
        <dbReference type="ChEBI" id="CHEBI:57501"/>
        <dbReference type="ChEBI" id="CHEBI:356416"/>
        <dbReference type="EC" id="5.4.3.8"/>
    </reaction>
</comment>
<comment type="cofactor">
    <cofactor evidence="1">
        <name>pyridoxal 5'-phosphate</name>
        <dbReference type="ChEBI" id="CHEBI:597326"/>
    </cofactor>
</comment>
<comment type="pathway">
    <text evidence="1">Porphyrin-containing compound metabolism; protoporphyrin-IX biosynthesis; 5-aminolevulinate from L-glutamyl-tRNA(Glu): step 2/2.</text>
</comment>
<comment type="subunit">
    <text evidence="1">Homodimer.</text>
</comment>
<comment type="subcellular location">
    <subcellularLocation>
        <location evidence="1">Cytoplasm</location>
    </subcellularLocation>
</comment>
<comment type="similarity">
    <text evidence="1">Belongs to the class-III pyridoxal-phosphate-dependent aminotransferase family. HemL subfamily.</text>
</comment>
<organism>
    <name type="scientific">Mycobacterium sp. (strain MCS)</name>
    <dbReference type="NCBI Taxonomy" id="164756"/>
    <lineage>
        <taxon>Bacteria</taxon>
        <taxon>Bacillati</taxon>
        <taxon>Actinomycetota</taxon>
        <taxon>Actinomycetes</taxon>
        <taxon>Mycobacteriales</taxon>
        <taxon>Mycobacteriaceae</taxon>
        <taxon>Mycobacterium</taxon>
    </lineage>
</organism>
<reference key="1">
    <citation type="submission" date="2006-06" db="EMBL/GenBank/DDBJ databases">
        <title>Complete sequence of chromosome of Mycobacterium sp. MCS.</title>
        <authorList>
            <consortium name="US DOE Joint Genome Institute"/>
            <person name="Copeland A."/>
            <person name="Lucas S."/>
            <person name="Lapidus A."/>
            <person name="Barry K."/>
            <person name="Detter J.C."/>
            <person name="Glavina del Rio T."/>
            <person name="Hammon N."/>
            <person name="Israni S."/>
            <person name="Dalin E."/>
            <person name="Tice H."/>
            <person name="Pitluck S."/>
            <person name="Martinez M."/>
            <person name="Schmutz J."/>
            <person name="Larimer F."/>
            <person name="Land M."/>
            <person name="Hauser L."/>
            <person name="Kyrpides N."/>
            <person name="Kim E."/>
            <person name="Miller C.D."/>
            <person name="Hughes J.E."/>
            <person name="Anderson A.J."/>
            <person name="Sims R.C."/>
            <person name="Richardson P."/>
        </authorList>
    </citation>
    <scope>NUCLEOTIDE SEQUENCE [LARGE SCALE GENOMIC DNA]</scope>
    <source>
        <strain>MCS</strain>
    </source>
</reference>
<dbReference type="EC" id="5.4.3.8" evidence="1"/>
<dbReference type="EMBL" id="CP000384">
    <property type="protein sequence ID" value="ABG06811.1"/>
    <property type="molecule type" value="Genomic_DNA"/>
</dbReference>
<dbReference type="SMR" id="Q1BE73"/>
<dbReference type="KEGG" id="mmc:Mmcs_0690"/>
<dbReference type="HOGENOM" id="CLU_016922_1_5_11"/>
<dbReference type="BioCyc" id="MSP164756:G1G6O-704-MONOMER"/>
<dbReference type="UniPathway" id="UPA00251">
    <property type="reaction ID" value="UER00317"/>
</dbReference>
<dbReference type="GO" id="GO:0005737">
    <property type="term" value="C:cytoplasm"/>
    <property type="evidence" value="ECO:0007669"/>
    <property type="project" value="UniProtKB-SubCell"/>
</dbReference>
<dbReference type="GO" id="GO:0042286">
    <property type="term" value="F:glutamate-1-semialdehyde 2,1-aminomutase activity"/>
    <property type="evidence" value="ECO:0007669"/>
    <property type="project" value="UniProtKB-UniRule"/>
</dbReference>
<dbReference type="GO" id="GO:0030170">
    <property type="term" value="F:pyridoxal phosphate binding"/>
    <property type="evidence" value="ECO:0007669"/>
    <property type="project" value="InterPro"/>
</dbReference>
<dbReference type="GO" id="GO:0008483">
    <property type="term" value="F:transaminase activity"/>
    <property type="evidence" value="ECO:0007669"/>
    <property type="project" value="InterPro"/>
</dbReference>
<dbReference type="GO" id="GO:0006782">
    <property type="term" value="P:protoporphyrinogen IX biosynthetic process"/>
    <property type="evidence" value="ECO:0007669"/>
    <property type="project" value="UniProtKB-UniRule"/>
</dbReference>
<dbReference type="CDD" id="cd00610">
    <property type="entry name" value="OAT_like"/>
    <property type="match status" value="1"/>
</dbReference>
<dbReference type="FunFam" id="3.40.640.10:FF:000021">
    <property type="entry name" value="Glutamate-1-semialdehyde 2,1-aminomutase"/>
    <property type="match status" value="1"/>
</dbReference>
<dbReference type="Gene3D" id="3.90.1150.10">
    <property type="entry name" value="Aspartate Aminotransferase, domain 1"/>
    <property type="match status" value="1"/>
</dbReference>
<dbReference type="Gene3D" id="3.40.640.10">
    <property type="entry name" value="Type I PLP-dependent aspartate aminotransferase-like (Major domain)"/>
    <property type="match status" value="1"/>
</dbReference>
<dbReference type="HAMAP" id="MF_00375">
    <property type="entry name" value="HemL_aminotrans_3"/>
    <property type="match status" value="1"/>
</dbReference>
<dbReference type="InterPro" id="IPR004639">
    <property type="entry name" value="4pyrrol_synth_GluAld_NH2Trfase"/>
</dbReference>
<dbReference type="InterPro" id="IPR005814">
    <property type="entry name" value="Aminotrans_3"/>
</dbReference>
<dbReference type="InterPro" id="IPR049704">
    <property type="entry name" value="Aminotrans_3_PPA_site"/>
</dbReference>
<dbReference type="InterPro" id="IPR015424">
    <property type="entry name" value="PyrdxlP-dep_Trfase"/>
</dbReference>
<dbReference type="InterPro" id="IPR015421">
    <property type="entry name" value="PyrdxlP-dep_Trfase_major"/>
</dbReference>
<dbReference type="InterPro" id="IPR015422">
    <property type="entry name" value="PyrdxlP-dep_Trfase_small"/>
</dbReference>
<dbReference type="NCBIfam" id="TIGR00713">
    <property type="entry name" value="hemL"/>
    <property type="match status" value="1"/>
</dbReference>
<dbReference type="NCBIfam" id="NF000818">
    <property type="entry name" value="PRK00062.1"/>
    <property type="match status" value="1"/>
</dbReference>
<dbReference type="PANTHER" id="PTHR43713">
    <property type="entry name" value="GLUTAMATE-1-SEMIALDEHYDE 2,1-AMINOMUTASE"/>
    <property type="match status" value="1"/>
</dbReference>
<dbReference type="PANTHER" id="PTHR43713:SF3">
    <property type="entry name" value="GLUTAMATE-1-SEMIALDEHYDE 2,1-AMINOMUTASE 1, CHLOROPLASTIC-RELATED"/>
    <property type="match status" value="1"/>
</dbReference>
<dbReference type="Pfam" id="PF00202">
    <property type="entry name" value="Aminotran_3"/>
    <property type="match status" value="1"/>
</dbReference>
<dbReference type="SUPFAM" id="SSF53383">
    <property type="entry name" value="PLP-dependent transferases"/>
    <property type="match status" value="1"/>
</dbReference>
<dbReference type="PROSITE" id="PS00600">
    <property type="entry name" value="AA_TRANSFER_CLASS_3"/>
    <property type="match status" value="1"/>
</dbReference>
<accession>Q1BE73</accession>
<gene>
    <name evidence="1" type="primary">hemL</name>
    <name type="ordered locus">Mmcs_0690</name>
</gene>
<keyword id="KW-0963">Cytoplasm</keyword>
<keyword id="KW-0413">Isomerase</keyword>
<keyword id="KW-0627">Porphyrin biosynthesis</keyword>
<keyword id="KW-0663">Pyridoxal phosphate</keyword>
<sequence>MGAHHTATEQSARLFADACAVIPGGVNSPVRAFNAVGGTPRFITSANGYWLTDADDNRYVDLVCSWGPMILGHAHPAVVEAVQRVAADGLSFGAPTPSETELASEIISRVAPVERLRMVNSGTEATMSAIRLARGFTGRPKIVKFSGCYHGHSDALLADAGSGVATLGLPSSPGVTGAATADTIVLPYNDVDAVEEIFEQVGDQIAAVITEASPGNMGAVPPEPGFNAALRRITEEHGALLILDEVMTGFRVSRSGWYGLDPVDGDLFTFGKVMSGGLPAAAFGGRAEVMERLAPLGPVYQAGTLSGNPVAMAAGLATLRTADDAVYAALDKNADRLAGLLTDALTDAGVTHRVQRGGNMLSVFFTAEPVGDFATARASETWRFPPFFHALLDAGVYPPPSAFEAWFVSAALDDEAFDRIAAALPGAARAAAEASRPA</sequence>
<name>GSA_MYCSS</name>
<proteinExistence type="inferred from homology"/>
<evidence type="ECO:0000255" key="1">
    <source>
        <dbReference type="HAMAP-Rule" id="MF_00375"/>
    </source>
</evidence>
<feature type="chain" id="PRO_0000382349" description="Glutamate-1-semialdehyde 2,1-aminomutase">
    <location>
        <begin position="1"/>
        <end position="438"/>
    </location>
</feature>
<feature type="modified residue" description="N6-(pyridoxal phosphate)lysine" evidence="1">
    <location>
        <position position="272"/>
    </location>
</feature>